<reference key="1">
    <citation type="journal article" date="2009" name="Environ. Microbiol.">
        <title>Genome sequence of Desulfobacterium autotrophicum HRM2, a marine sulfate reducer oxidizing organic carbon completely to carbon dioxide.</title>
        <authorList>
            <person name="Strittmatter A.W."/>
            <person name="Liesegang H."/>
            <person name="Rabus R."/>
            <person name="Decker I."/>
            <person name="Amann J."/>
            <person name="Andres S."/>
            <person name="Henne A."/>
            <person name="Fricke W.F."/>
            <person name="Martinez-Arias R."/>
            <person name="Bartels D."/>
            <person name="Goesmann A."/>
            <person name="Krause L."/>
            <person name="Puehler A."/>
            <person name="Klenk H.P."/>
            <person name="Richter M."/>
            <person name="Schuler M."/>
            <person name="Gloeckner F.O."/>
            <person name="Meyerdierks A."/>
            <person name="Gottschalk G."/>
            <person name="Amann R."/>
        </authorList>
    </citation>
    <scope>NUCLEOTIDE SEQUENCE [LARGE SCALE GENOMIC DNA]</scope>
    <source>
        <strain>ATCC 43914 / DSM 3382 / VKM B-1955 / HRM2</strain>
    </source>
</reference>
<protein>
    <recommendedName>
        <fullName evidence="1">ATP-dependent Clp protease proteolytic subunit</fullName>
        <ecNumber evidence="1">3.4.21.92</ecNumber>
    </recommendedName>
    <alternativeName>
        <fullName evidence="1">Endopeptidase Clp</fullName>
    </alternativeName>
</protein>
<evidence type="ECO:0000255" key="1">
    <source>
        <dbReference type="HAMAP-Rule" id="MF_00444"/>
    </source>
</evidence>
<name>CLPP_DESAH</name>
<dbReference type="EC" id="3.4.21.92" evidence="1"/>
<dbReference type="EMBL" id="CP001087">
    <property type="protein sequence ID" value="ACN13555.1"/>
    <property type="molecule type" value="Genomic_DNA"/>
</dbReference>
<dbReference type="RefSeq" id="WP_012662804.1">
    <property type="nucleotide sequence ID" value="NC_012108.1"/>
</dbReference>
<dbReference type="SMR" id="C0QGT0"/>
<dbReference type="STRING" id="177437.HRM2_04380"/>
<dbReference type="MEROPS" id="S14.001"/>
<dbReference type="KEGG" id="dat:HRM2_04380"/>
<dbReference type="eggNOG" id="COG0740">
    <property type="taxonomic scope" value="Bacteria"/>
</dbReference>
<dbReference type="HOGENOM" id="CLU_058707_3_2_7"/>
<dbReference type="OrthoDB" id="9802800at2"/>
<dbReference type="Proteomes" id="UP000000442">
    <property type="component" value="Chromosome"/>
</dbReference>
<dbReference type="GO" id="GO:0005737">
    <property type="term" value="C:cytoplasm"/>
    <property type="evidence" value="ECO:0007669"/>
    <property type="project" value="UniProtKB-SubCell"/>
</dbReference>
<dbReference type="GO" id="GO:0009368">
    <property type="term" value="C:endopeptidase Clp complex"/>
    <property type="evidence" value="ECO:0007669"/>
    <property type="project" value="TreeGrafter"/>
</dbReference>
<dbReference type="GO" id="GO:0004176">
    <property type="term" value="F:ATP-dependent peptidase activity"/>
    <property type="evidence" value="ECO:0007669"/>
    <property type="project" value="InterPro"/>
</dbReference>
<dbReference type="GO" id="GO:0051117">
    <property type="term" value="F:ATPase binding"/>
    <property type="evidence" value="ECO:0007669"/>
    <property type="project" value="TreeGrafter"/>
</dbReference>
<dbReference type="GO" id="GO:0004252">
    <property type="term" value="F:serine-type endopeptidase activity"/>
    <property type="evidence" value="ECO:0007669"/>
    <property type="project" value="UniProtKB-UniRule"/>
</dbReference>
<dbReference type="GO" id="GO:0006515">
    <property type="term" value="P:protein quality control for misfolded or incompletely synthesized proteins"/>
    <property type="evidence" value="ECO:0007669"/>
    <property type="project" value="TreeGrafter"/>
</dbReference>
<dbReference type="CDD" id="cd07017">
    <property type="entry name" value="S14_ClpP_2"/>
    <property type="match status" value="1"/>
</dbReference>
<dbReference type="FunFam" id="3.90.226.10:FF:000001">
    <property type="entry name" value="ATP-dependent Clp protease proteolytic subunit"/>
    <property type="match status" value="1"/>
</dbReference>
<dbReference type="Gene3D" id="3.90.226.10">
    <property type="entry name" value="2-enoyl-CoA Hydratase, Chain A, domain 1"/>
    <property type="match status" value="1"/>
</dbReference>
<dbReference type="HAMAP" id="MF_00444">
    <property type="entry name" value="ClpP"/>
    <property type="match status" value="1"/>
</dbReference>
<dbReference type="InterPro" id="IPR001907">
    <property type="entry name" value="ClpP"/>
</dbReference>
<dbReference type="InterPro" id="IPR029045">
    <property type="entry name" value="ClpP/crotonase-like_dom_sf"/>
</dbReference>
<dbReference type="InterPro" id="IPR023562">
    <property type="entry name" value="ClpP/TepA"/>
</dbReference>
<dbReference type="InterPro" id="IPR033135">
    <property type="entry name" value="ClpP_His_AS"/>
</dbReference>
<dbReference type="InterPro" id="IPR018215">
    <property type="entry name" value="ClpP_Ser_AS"/>
</dbReference>
<dbReference type="NCBIfam" id="TIGR00493">
    <property type="entry name" value="clpP"/>
    <property type="match status" value="1"/>
</dbReference>
<dbReference type="NCBIfam" id="NF001368">
    <property type="entry name" value="PRK00277.1"/>
    <property type="match status" value="1"/>
</dbReference>
<dbReference type="NCBIfam" id="NF009205">
    <property type="entry name" value="PRK12553.1"/>
    <property type="match status" value="1"/>
</dbReference>
<dbReference type="PANTHER" id="PTHR10381">
    <property type="entry name" value="ATP-DEPENDENT CLP PROTEASE PROTEOLYTIC SUBUNIT"/>
    <property type="match status" value="1"/>
</dbReference>
<dbReference type="PANTHER" id="PTHR10381:SF70">
    <property type="entry name" value="ATP-DEPENDENT CLP PROTEASE PROTEOLYTIC SUBUNIT"/>
    <property type="match status" value="1"/>
</dbReference>
<dbReference type="Pfam" id="PF00574">
    <property type="entry name" value="CLP_protease"/>
    <property type="match status" value="1"/>
</dbReference>
<dbReference type="PRINTS" id="PR00127">
    <property type="entry name" value="CLPPROTEASEP"/>
</dbReference>
<dbReference type="SUPFAM" id="SSF52096">
    <property type="entry name" value="ClpP/crotonase"/>
    <property type="match status" value="1"/>
</dbReference>
<dbReference type="PROSITE" id="PS00382">
    <property type="entry name" value="CLP_PROTEASE_HIS"/>
    <property type="match status" value="1"/>
</dbReference>
<dbReference type="PROSITE" id="PS00381">
    <property type="entry name" value="CLP_PROTEASE_SER"/>
    <property type="match status" value="1"/>
</dbReference>
<sequence>MPLIPMVVEQSNRGERAYDIYSRLLKDRIIFLGSAMDDEVANLIVAQLLFLESEDPEKDINFYINSPGGVVTAGMAVYDTMQYIKPDVATVCIGQAASMGALLLAAGAKGKRFSLPNSRIMIHQPLGGAQGQASDIKIQANEILRMKEVLSGILSKHTGQNFDKISEDTDRDFFMSGDQAKEYGLVDHVVASRDELEKAEAAKEK</sequence>
<comment type="function">
    <text evidence="1">Cleaves peptides in various proteins in a process that requires ATP hydrolysis. Has a chymotrypsin-like activity. Plays a major role in the degradation of misfolded proteins.</text>
</comment>
<comment type="catalytic activity">
    <reaction evidence="1">
        <text>Hydrolysis of proteins to small peptides in the presence of ATP and magnesium. alpha-casein is the usual test substrate. In the absence of ATP, only oligopeptides shorter than five residues are hydrolyzed (such as succinyl-Leu-Tyr-|-NHMec, and Leu-Tyr-Leu-|-Tyr-Trp, in which cleavage of the -Tyr-|-Leu- and -Tyr-|-Trp bonds also occurs).</text>
        <dbReference type="EC" id="3.4.21.92"/>
    </reaction>
</comment>
<comment type="subunit">
    <text evidence="1">Fourteen ClpP subunits assemble into 2 heptameric rings which stack back to back to give a disk-like structure with a central cavity, resembling the structure of eukaryotic proteasomes.</text>
</comment>
<comment type="subcellular location">
    <subcellularLocation>
        <location evidence="1">Cytoplasm</location>
    </subcellularLocation>
</comment>
<comment type="similarity">
    <text evidence="1">Belongs to the peptidase S14 family.</text>
</comment>
<feature type="chain" id="PRO_1000206145" description="ATP-dependent Clp protease proteolytic subunit">
    <location>
        <begin position="1"/>
        <end position="205"/>
    </location>
</feature>
<feature type="active site" description="Nucleophile" evidence="1">
    <location>
        <position position="98"/>
    </location>
</feature>
<feature type="active site" evidence="1">
    <location>
        <position position="123"/>
    </location>
</feature>
<keyword id="KW-0963">Cytoplasm</keyword>
<keyword id="KW-0378">Hydrolase</keyword>
<keyword id="KW-0645">Protease</keyword>
<keyword id="KW-1185">Reference proteome</keyword>
<keyword id="KW-0720">Serine protease</keyword>
<organism>
    <name type="scientific">Desulforapulum autotrophicum (strain ATCC 43914 / DSM 3382 / VKM B-1955 / HRM2)</name>
    <name type="common">Desulfobacterium autotrophicum</name>
    <dbReference type="NCBI Taxonomy" id="177437"/>
    <lineage>
        <taxon>Bacteria</taxon>
        <taxon>Pseudomonadati</taxon>
        <taxon>Thermodesulfobacteriota</taxon>
        <taxon>Desulfobacteria</taxon>
        <taxon>Desulfobacterales</taxon>
        <taxon>Desulfobacteraceae</taxon>
        <taxon>Desulforapulum</taxon>
    </lineage>
</organism>
<accession>C0QGT0</accession>
<proteinExistence type="inferred from homology"/>
<gene>
    <name evidence="1" type="primary">clpP</name>
    <name type="ordered locus">HRM2_04380</name>
</gene>